<evidence type="ECO:0000255" key="1">
    <source>
        <dbReference type="HAMAP-Rule" id="MF_00298"/>
    </source>
</evidence>
<organism>
    <name type="scientific">Pseudomonas fluorescens (strain ATCC BAA-477 / NRRL B-23932 / Pf-5)</name>
    <dbReference type="NCBI Taxonomy" id="220664"/>
    <lineage>
        <taxon>Bacteria</taxon>
        <taxon>Pseudomonadati</taxon>
        <taxon>Pseudomonadota</taxon>
        <taxon>Gammaproteobacteria</taxon>
        <taxon>Pseudomonadales</taxon>
        <taxon>Pseudomonadaceae</taxon>
        <taxon>Pseudomonas</taxon>
    </lineage>
</organism>
<name>RPPH_PSEF5</name>
<reference key="1">
    <citation type="journal article" date="2005" name="Nat. Biotechnol.">
        <title>Complete genome sequence of the plant commensal Pseudomonas fluorescens Pf-5.</title>
        <authorList>
            <person name="Paulsen I.T."/>
            <person name="Press C.M."/>
            <person name="Ravel J."/>
            <person name="Kobayashi D.Y."/>
            <person name="Myers G.S.A."/>
            <person name="Mavrodi D.V."/>
            <person name="DeBoy R.T."/>
            <person name="Seshadri R."/>
            <person name="Ren Q."/>
            <person name="Madupu R."/>
            <person name="Dodson R.J."/>
            <person name="Durkin A.S."/>
            <person name="Brinkac L.M."/>
            <person name="Daugherty S.C."/>
            <person name="Sullivan S.A."/>
            <person name="Rosovitz M.J."/>
            <person name="Gwinn M.L."/>
            <person name="Zhou L."/>
            <person name="Schneider D.J."/>
            <person name="Cartinhour S.W."/>
            <person name="Nelson W.C."/>
            <person name="Weidman J."/>
            <person name="Watkins K."/>
            <person name="Tran K."/>
            <person name="Khouri H."/>
            <person name="Pierson E.A."/>
            <person name="Pierson L.S. III"/>
            <person name="Thomashow L.S."/>
            <person name="Loper J.E."/>
        </authorList>
    </citation>
    <scope>NUCLEOTIDE SEQUENCE [LARGE SCALE GENOMIC DNA]</scope>
    <source>
        <strain>ATCC BAA-477 / NRRL B-23932 / Pf-5</strain>
    </source>
</reference>
<protein>
    <recommendedName>
        <fullName evidence="1">RNA pyrophosphohydrolase</fullName>
        <ecNumber evidence="1">3.6.1.-</ecNumber>
    </recommendedName>
    <alternativeName>
        <fullName evidence="1">(Di)nucleoside polyphosphate hydrolase</fullName>
    </alternativeName>
</protein>
<feature type="chain" id="PRO_0000231924" description="RNA pyrophosphohydrolase">
    <location>
        <begin position="1"/>
        <end position="159"/>
    </location>
</feature>
<feature type="domain" description="Nudix hydrolase" evidence="1">
    <location>
        <begin position="6"/>
        <end position="149"/>
    </location>
</feature>
<feature type="short sequence motif" description="Nudix box">
    <location>
        <begin position="38"/>
        <end position="59"/>
    </location>
</feature>
<keyword id="KW-0378">Hydrolase</keyword>
<gene>
    <name evidence="1" type="primary">rppH</name>
    <name evidence="1" type="synonym">nudH</name>
    <name type="ordered locus">PFL_5900</name>
</gene>
<dbReference type="EC" id="3.6.1.-" evidence="1"/>
<dbReference type="EMBL" id="CP000076">
    <property type="protein sequence ID" value="AAY95090.1"/>
    <property type="molecule type" value="Genomic_DNA"/>
</dbReference>
<dbReference type="RefSeq" id="WP_011064073.1">
    <property type="nucleotide sequence ID" value="NC_004129.6"/>
</dbReference>
<dbReference type="SMR" id="Q4K475"/>
<dbReference type="STRING" id="220664.PFL_5900"/>
<dbReference type="KEGG" id="pfl:PFL_5900"/>
<dbReference type="eggNOG" id="COG0494">
    <property type="taxonomic scope" value="Bacteria"/>
</dbReference>
<dbReference type="HOGENOM" id="CLU_087195_3_1_6"/>
<dbReference type="Proteomes" id="UP000008540">
    <property type="component" value="Chromosome"/>
</dbReference>
<dbReference type="GO" id="GO:0005737">
    <property type="term" value="C:cytoplasm"/>
    <property type="evidence" value="ECO:0007669"/>
    <property type="project" value="TreeGrafter"/>
</dbReference>
<dbReference type="GO" id="GO:0034353">
    <property type="term" value="F:mRNA 5'-diphosphatase activity"/>
    <property type="evidence" value="ECO:0007669"/>
    <property type="project" value="TreeGrafter"/>
</dbReference>
<dbReference type="GO" id="GO:0006402">
    <property type="term" value="P:mRNA catabolic process"/>
    <property type="evidence" value="ECO:0007669"/>
    <property type="project" value="TreeGrafter"/>
</dbReference>
<dbReference type="CDD" id="cd03671">
    <property type="entry name" value="NUDIX_Ap4A_hydrolase_plant_like"/>
    <property type="match status" value="1"/>
</dbReference>
<dbReference type="FunFam" id="3.90.79.10:FF:000001">
    <property type="entry name" value="RNA pyrophosphohydrolase"/>
    <property type="match status" value="1"/>
</dbReference>
<dbReference type="Gene3D" id="3.90.79.10">
    <property type="entry name" value="Nucleoside Triphosphate Pyrophosphohydrolase"/>
    <property type="match status" value="1"/>
</dbReference>
<dbReference type="HAMAP" id="MF_00298">
    <property type="entry name" value="Nudix_RppH"/>
    <property type="match status" value="1"/>
</dbReference>
<dbReference type="InterPro" id="IPR020476">
    <property type="entry name" value="Nudix_hydrolase"/>
</dbReference>
<dbReference type="InterPro" id="IPR015797">
    <property type="entry name" value="NUDIX_hydrolase-like_dom_sf"/>
</dbReference>
<dbReference type="InterPro" id="IPR020084">
    <property type="entry name" value="NUDIX_hydrolase_CS"/>
</dbReference>
<dbReference type="InterPro" id="IPR000086">
    <property type="entry name" value="NUDIX_hydrolase_dom"/>
</dbReference>
<dbReference type="InterPro" id="IPR022927">
    <property type="entry name" value="RppH"/>
</dbReference>
<dbReference type="NCBIfam" id="NF001934">
    <property type="entry name" value="PRK00714.1-1"/>
    <property type="match status" value="1"/>
</dbReference>
<dbReference type="NCBIfam" id="NF001937">
    <property type="entry name" value="PRK00714.1-4"/>
    <property type="match status" value="1"/>
</dbReference>
<dbReference type="NCBIfam" id="NF001938">
    <property type="entry name" value="PRK00714.1-5"/>
    <property type="match status" value="1"/>
</dbReference>
<dbReference type="PANTHER" id="PTHR23114">
    <property type="entry name" value="M7GPPPN-MRNA HYDROLASE"/>
    <property type="match status" value="1"/>
</dbReference>
<dbReference type="PANTHER" id="PTHR23114:SF17">
    <property type="entry name" value="M7GPPPN-MRNA HYDROLASE"/>
    <property type="match status" value="1"/>
</dbReference>
<dbReference type="Pfam" id="PF00293">
    <property type="entry name" value="NUDIX"/>
    <property type="match status" value="1"/>
</dbReference>
<dbReference type="PRINTS" id="PR00502">
    <property type="entry name" value="NUDIXFAMILY"/>
</dbReference>
<dbReference type="SUPFAM" id="SSF55811">
    <property type="entry name" value="Nudix"/>
    <property type="match status" value="1"/>
</dbReference>
<dbReference type="PROSITE" id="PS51462">
    <property type="entry name" value="NUDIX"/>
    <property type="match status" value="1"/>
</dbReference>
<dbReference type="PROSITE" id="PS00893">
    <property type="entry name" value="NUDIX_BOX"/>
    <property type="match status" value="1"/>
</dbReference>
<proteinExistence type="inferred from homology"/>
<sequence length="159" mass="18863">MIDPDGFRPNVGIILTNDAGQVLWARRINQDAWQFPQGGINPDETPEDALYRELNEEVGLEREDVQILACTRGWLRYRLPQRLVRTHSQPLCIGQKQKWFLLRLISNEQRVRMDLTGKPEFDGWRWVSYWYPLGQVVTFKREVYRRALKELAPRLLVRD</sequence>
<accession>Q4K475</accession>
<comment type="function">
    <text evidence="1">Accelerates the degradation of transcripts by removing pyrophosphate from the 5'-end of triphosphorylated RNA, leading to a more labile monophosphorylated state that can stimulate subsequent ribonuclease cleavage.</text>
</comment>
<comment type="cofactor">
    <cofactor evidence="1">
        <name>a divalent metal cation</name>
        <dbReference type="ChEBI" id="CHEBI:60240"/>
    </cofactor>
</comment>
<comment type="similarity">
    <text evidence="1">Belongs to the Nudix hydrolase family. RppH subfamily.</text>
</comment>